<keyword id="KW-0686">Riboflavin biosynthesis</keyword>
<keyword id="KW-0808">Transferase</keyword>
<protein>
    <recommendedName>
        <fullName evidence="1">6,7-dimethyl-8-ribityllumazine synthase</fullName>
        <shortName evidence="1">DMRL synthase</shortName>
        <shortName evidence="1">LS</shortName>
        <shortName evidence="1">Lumazine synthase</shortName>
        <ecNumber evidence="1">2.5.1.78</ecNumber>
    </recommendedName>
</protein>
<accession>B0TJZ0</accession>
<comment type="function">
    <text evidence="1">Catalyzes the formation of 6,7-dimethyl-8-ribityllumazine by condensation of 5-amino-6-(D-ribitylamino)uracil with 3,4-dihydroxy-2-butanone 4-phosphate. This is the penultimate step in the biosynthesis of riboflavin.</text>
</comment>
<comment type="catalytic activity">
    <reaction evidence="1">
        <text>(2S)-2-hydroxy-3-oxobutyl phosphate + 5-amino-6-(D-ribitylamino)uracil = 6,7-dimethyl-8-(1-D-ribityl)lumazine + phosphate + 2 H2O + H(+)</text>
        <dbReference type="Rhea" id="RHEA:26152"/>
        <dbReference type="ChEBI" id="CHEBI:15377"/>
        <dbReference type="ChEBI" id="CHEBI:15378"/>
        <dbReference type="ChEBI" id="CHEBI:15934"/>
        <dbReference type="ChEBI" id="CHEBI:43474"/>
        <dbReference type="ChEBI" id="CHEBI:58201"/>
        <dbReference type="ChEBI" id="CHEBI:58830"/>
        <dbReference type="EC" id="2.5.1.78"/>
    </reaction>
</comment>
<comment type="pathway">
    <text evidence="1">Cofactor biosynthesis; riboflavin biosynthesis; riboflavin from 2-hydroxy-3-oxobutyl phosphate and 5-amino-6-(D-ribitylamino)uracil: step 1/2.</text>
</comment>
<comment type="subunit">
    <text evidence="1">Forms an icosahedral capsid composed of 60 subunits, arranged as a dodecamer of pentamers.</text>
</comment>
<comment type="similarity">
    <text evidence="1">Belongs to the DMRL synthase family.</text>
</comment>
<dbReference type="EC" id="2.5.1.78" evidence="1"/>
<dbReference type="EMBL" id="CP000931">
    <property type="protein sequence ID" value="ABZ75777.1"/>
    <property type="molecule type" value="Genomic_DNA"/>
</dbReference>
<dbReference type="RefSeq" id="WP_012276319.1">
    <property type="nucleotide sequence ID" value="NC_010334.1"/>
</dbReference>
<dbReference type="SMR" id="B0TJZ0"/>
<dbReference type="STRING" id="458817.Shal_1208"/>
<dbReference type="KEGG" id="shl:Shal_1208"/>
<dbReference type="eggNOG" id="COG0054">
    <property type="taxonomic scope" value="Bacteria"/>
</dbReference>
<dbReference type="HOGENOM" id="CLU_089358_1_1_6"/>
<dbReference type="OrthoDB" id="9809709at2"/>
<dbReference type="UniPathway" id="UPA00275">
    <property type="reaction ID" value="UER00404"/>
</dbReference>
<dbReference type="Proteomes" id="UP000001317">
    <property type="component" value="Chromosome"/>
</dbReference>
<dbReference type="GO" id="GO:0005829">
    <property type="term" value="C:cytosol"/>
    <property type="evidence" value="ECO:0007669"/>
    <property type="project" value="TreeGrafter"/>
</dbReference>
<dbReference type="GO" id="GO:0009349">
    <property type="term" value="C:riboflavin synthase complex"/>
    <property type="evidence" value="ECO:0007669"/>
    <property type="project" value="InterPro"/>
</dbReference>
<dbReference type="GO" id="GO:0000906">
    <property type="term" value="F:6,7-dimethyl-8-ribityllumazine synthase activity"/>
    <property type="evidence" value="ECO:0007669"/>
    <property type="project" value="UniProtKB-UniRule"/>
</dbReference>
<dbReference type="GO" id="GO:0009231">
    <property type="term" value="P:riboflavin biosynthetic process"/>
    <property type="evidence" value="ECO:0007669"/>
    <property type="project" value="UniProtKB-UniRule"/>
</dbReference>
<dbReference type="CDD" id="cd09209">
    <property type="entry name" value="Lumazine_synthase-I"/>
    <property type="match status" value="1"/>
</dbReference>
<dbReference type="FunFam" id="3.40.50.960:FF:000001">
    <property type="entry name" value="6,7-dimethyl-8-ribityllumazine synthase"/>
    <property type="match status" value="1"/>
</dbReference>
<dbReference type="Gene3D" id="3.40.50.960">
    <property type="entry name" value="Lumazine/riboflavin synthase"/>
    <property type="match status" value="1"/>
</dbReference>
<dbReference type="HAMAP" id="MF_00178">
    <property type="entry name" value="Lumazine_synth"/>
    <property type="match status" value="1"/>
</dbReference>
<dbReference type="InterPro" id="IPR034964">
    <property type="entry name" value="LS"/>
</dbReference>
<dbReference type="InterPro" id="IPR002180">
    <property type="entry name" value="LS/RS"/>
</dbReference>
<dbReference type="InterPro" id="IPR036467">
    <property type="entry name" value="LS/RS_sf"/>
</dbReference>
<dbReference type="NCBIfam" id="TIGR00114">
    <property type="entry name" value="lumazine-synth"/>
    <property type="match status" value="1"/>
</dbReference>
<dbReference type="NCBIfam" id="NF000812">
    <property type="entry name" value="PRK00061.1-4"/>
    <property type="match status" value="1"/>
</dbReference>
<dbReference type="PANTHER" id="PTHR21058:SF0">
    <property type="entry name" value="6,7-DIMETHYL-8-RIBITYLLUMAZINE SYNTHASE"/>
    <property type="match status" value="1"/>
</dbReference>
<dbReference type="PANTHER" id="PTHR21058">
    <property type="entry name" value="6,7-DIMETHYL-8-RIBITYLLUMAZINE SYNTHASE DMRL SYNTHASE LUMAZINE SYNTHASE"/>
    <property type="match status" value="1"/>
</dbReference>
<dbReference type="Pfam" id="PF00885">
    <property type="entry name" value="DMRL_synthase"/>
    <property type="match status" value="1"/>
</dbReference>
<dbReference type="SUPFAM" id="SSF52121">
    <property type="entry name" value="Lumazine synthase"/>
    <property type="match status" value="1"/>
</dbReference>
<name>RISB_SHEHH</name>
<proteinExistence type="inferred from homology"/>
<feature type="chain" id="PRO_1000077248" description="6,7-dimethyl-8-ribityllumazine synthase">
    <location>
        <begin position="1"/>
        <end position="158"/>
    </location>
</feature>
<feature type="active site" description="Proton donor" evidence="1">
    <location>
        <position position="89"/>
    </location>
</feature>
<feature type="binding site" evidence="1">
    <location>
        <position position="22"/>
    </location>
    <ligand>
        <name>5-amino-6-(D-ribitylamino)uracil</name>
        <dbReference type="ChEBI" id="CHEBI:15934"/>
    </ligand>
</feature>
<feature type="binding site" evidence="1">
    <location>
        <begin position="57"/>
        <end position="59"/>
    </location>
    <ligand>
        <name>5-amino-6-(D-ribitylamino)uracil</name>
        <dbReference type="ChEBI" id="CHEBI:15934"/>
    </ligand>
</feature>
<feature type="binding site" evidence="1">
    <location>
        <begin position="81"/>
        <end position="83"/>
    </location>
    <ligand>
        <name>5-amino-6-(D-ribitylamino)uracil</name>
        <dbReference type="ChEBI" id="CHEBI:15934"/>
    </ligand>
</feature>
<feature type="binding site" evidence="1">
    <location>
        <begin position="86"/>
        <end position="87"/>
    </location>
    <ligand>
        <name>(2S)-2-hydroxy-3-oxobutyl phosphate</name>
        <dbReference type="ChEBI" id="CHEBI:58830"/>
    </ligand>
</feature>
<feature type="binding site" evidence="1">
    <location>
        <position position="114"/>
    </location>
    <ligand>
        <name>5-amino-6-(D-ribitylamino)uracil</name>
        <dbReference type="ChEBI" id="CHEBI:15934"/>
    </ligand>
</feature>
<feature type="binding site" evidence="1">
    <location>
        <position position="128"/>
    </location>
    <ligand>
        <name>(2S)-2-hydroxy-3-oxobutyl phosphate</name>
        <dbReference type="ChEBI" id="CHEBI:58830"/>
    </ligand>
</feature>
<sequence>MNVVQGNIESKNAKVAIVVSRFNSFVVDSLLNGAVDTLKRFGQVADENITVVKVPGAVELPLAARRVAACGKFDGIIALGAVIRGGTPHFDFVAGECNKGLAQVALEFDIPVSFGVLTTDTIEQAIERSGTKAGNKGGEAALGLLEMVNVLQALEEQL</sequence>
<evidence type="ECO:0000255" key="1">
    <source>
        <dbReference type="HAMAP-Rule" id="MF_00178"/>
    </source>
</evidence>
<gene>
    <name evidence="1" type="primary">ribH</name>
    <name type="ordered locus">Shal_1208</name>
</gene>
<reference key="1">
    <citation type="submission" date="2008-01" db="EMBL/GenBank/DDBJ databases">
        <title>Complete sequence of Shewanella halifaxensis HAW-EB4.</title>
        <authorList>
            <consortium name="US DOE Joint Genome Institute"/>
            <person name="Copeland A."/>
            <person name="Lucas S."/>
            <person name="Lapidus A."/>
            <person name="Glavina del Rio T."/>
            <person name="Dalin E."/>
            <person name="Tice H."/>
            <person name="Bruce D."/>
            <person name="Goodwin L."/>
            <person name="Pitluck S."/>
            <person name="Sims D."/>
            <person name="Brettin T."/>
            <person name="Detter J.C."/>
            <person name="Han C."/>
            <person name="Kuske C.R."/>
            <person name="Schmutz J."/>
            <person name="Larimer F."/>
            <person name="Land M."/>
            <person name="Hauser L."/>
            <person name="Kyrpides N."/>
            <person name="Kim E."/>
            <person name="Zhao J.-S."/>
            <person name="Richardson P."/>
        </authorList>
    </citation>
    <scope>NUCLEOTIDE SEQUENCE [LARGE SCALE GENOMIC DNA]</scope>
    <source>
        <strain>HAW-EB4</strain>
    </source>
</reference>
<organism>
    <name type="scientific">Shewanella halifaxensis (strain HAW-EB4)</name>
    <dbReference type="NCBI Taxonomy" id="458817"/>
    <lineage>
        <taxon>Bacteria</taxon>
        <taxon>Pseudomonadati</taxon>
        <taxon>Pseudomonadota</taxon>
        <taxon>Gammaproteobacteria</taxon>
        <taxon>Alteromonadales</taxon>
        <taxon>Shewanellaceae</taxon>
        <taxon>Shewanella</taxon>
    </lineage>
</organism>